<dbReference type="EC" id="7.1.1.2"/>
<dbReference type="EMBL" id="AB011231">
    <property type="protein sequence ID" value="BAA32123.1"/>
    <property type="molecule type" value="Genomic_DNA"/>
</dbReference>
<dbReference type="SMR" id="O78714"/>
<dbReference type="GO" id="GO:0005743">
    <property type="term" value="C:mitochondrial inner membrane"/>
    <property type="evidence" value="ECO:0007669"/>
    <property type="project" value="UniProtKB-SubCell"/>
</dbReference>
<dbReference type="GO" id="GO:0008137">
    <property type="term" value="F:NADH dehydrogenase (ubiquinone) activity"/>
    <property type="evidence" value="ECO:0007669"/>
    <property type="project" value="UniProtKB-EC"/>
</dbReference>
<dbReference type="GO" id="GO:0009060">
    <property type="term" value="P:aerobic respiration"/>
    <property type="evidence" value="ECO:0007669"/>
    <property type="project" value="TreeGrafter"/>
</dbReference>
<dbReference type="HAMAP" id="MF_01350">
    <property type="entry name" value="NDH1_NuoH"/>
    <property type="match status" value="1"/>
</dbReference>
<dbReference type="InterPro" id="IPR001694">
    <property type="entry name" value="NADH_UbQ_OxRdtase_su1/FPO"/>
</dbReference>
<dbReference type="InterPro" id="IPR018086">
    <property type="entry name" value="NADH_UbQ_OxRdtase_su1_CS"/>
</dbReference>
<dbReference type="PANTHER" id="PTHR11432">
    <property type="entry name" value="NADH DEHYDROGENASE SUBUNIT 1"/>
    <property type="match status" value="1"/>
</dbReference>
<dbReference type="PANTHER" id="PTHR11432:SF3">
    <property type="entry name" value="NADH-UBIQUINONE OXIDOREDUCTASE CHAIN 1"/>
    <property type="match status" value="1"/>
</dbReference>
<dbReference type="Pfam" id="PF00146">
    <property type="entry name" value="NADHdh"/>
    <property type="match status" value="1"/>
</dbReference>
<dbReference type="PROSITE" id="PS00667">
    <property type="entry name" value="COMPLEX1_ND1_1"/>
    <property type="match status" value="1"/>
</dbReference>
<dbReference type="PROSITE" id="PS00668">
    <property type="entry name" value="COMPLEX1_ND1_2"/>
    <property type="match status" value="1"/>
</dbReference>
<feature type="chain" id="PRO_0000117483" description="NADH-ubiquinone oxidoreductase chain 1">
    <location>
        <begin position="1"/>
        <end position="318"/>
    </location>
</feature>
<feature type="transmembrane region" description="Helical" evidence="2">
    <location>
        <begin position="3"/>
        <end position="23"/>
    </location>
</feature>
<feature type="transmembrane region" description="Helical" evidence="2">
    <location>
        <begin position="68"/>
        <end position="88"/>
    </location>
</feature>
<feature type="transmembrane region" description="Helical" evidence="2">
    <location>
        <begin position="100"/>
        <end position="120"/>
    </location>
</feature>
<feature type="transmembrane region" description="Helical" evidence="2">
    <location>
        <begin position="144"/>
        <end position="164"/>
    </location>
</feature>
<feature type="transmembrane region" description="Helical" evidence="2">
    <location>
        <begin position="171"/>
        <end position="191"/>
    </location>
</feature>
<feature type="transmembrane region" description="Helical" evidence="2">
    <location>
        <begin position="231"/>
        <end position="251"/>
    </location>
</feature>
<feature type="transmembrane region" description="Helical" evidence="2">
    <location>
        <begin position="254"/>
        <end position="276"/>
    </location>
</feature>
<feature type="transmembrane region" description="Helical" evidence="2">
    <location>
        <begin position="293"/>
        <end position="313"/>
    </location>
</feature>
<accession>O78714</accession>
<comment type="function">
    <text evidence="1">Core subunit of the mitochondrial membrane respiratory chain NADH dehydrogenase (Complex I) that is believed to belong to the minimal assembly required for catalysis. Complex I functions in the transfer of electrons from NADH to the respiratory chain. The immediate electron acceptor for the enzyme is believed to be ubiquinone (By similarity).</text>
</comment>
<comment type="catalytic activity">
    <reaction>
        <text>a ubiquinone + NADH + 5 H(+)(in) = a ubiquinol + NAD(+) + 4 H(+)(out)</text>
        <dbReference type="Rhea" id="RHEA:29091"/>
        <dbReference type="Rhea" id="RHEA-COMP:9565"/>
        <dbReference type="Rhea" id="RHEA-COMP:9566"/>
        <dbReference type="ChEBI" id="CHEBI:15378"/>
        <dbReference type="ChEBI" id="CHEBI:16389"/>
        <dbReference type="ChEBI" id="CHEBI:17976"/>
        <dbReference type="ChEBI" id="CHEBI:57540"/>
        <dbReference type="ChEBI" id="CHEBI:57945"/>
        <dbReference type="EC" id="7.1.1.2"/>
    </reaction>
</comment>
<comment type="subcellular location">
    <subcellularLocation>
        <location evidence="1">Mitochondrion inner membrane</location>
        <topology evidence="1">Multi-pass membrane protein</topology>
    </subcellularLocation>
</comment>
<comment type="similarity">
    <text evidence="3">Belongs to the complex I subunit 1 family.</text>
</comment>
<reference key="1">
    <citation type="journal article" date="1998" name="J. Mol. Evol.">
        <title>Conflict among individual mitochondrial proteins in resolving the phylogeny of eutherian orders.</title>
        <authorList>
            <person name="Cao Y."/>
            <person name="Janke A."/>
            <person name="Waddell P.J."/>
            <person name="Westerman M."/>
            <person name="Takenaka O."/>
            <person name="Murata S."/>
            <person name="Okada N."/>
            <person name="Paeaebo S."/>
            <person name="Hasegawa M."/>
        </authorList>
    </citation>
    <scope>NUCLEOTIDE SEQUENCE [GENOMIC DNA]</scope>
    <source>
        <tissue>Liver</tissue>
    </source>
</reference>
<gene>
    <name type="primary">MT-ND1</name>
    <name type="synonym">MTND1</name>
    <name type="synonym">NADH1</name>
    <name type="synonym">ND1</name>
</gene>
<evidence type="ECO:0000250" key="1"/>
<evidence type="ECO:0000255" key="2"/>
<evidence type="ECO:0000305" key="3"/>
<proteinExistence type="inferred from homology"/>
<name>NU1M_TACAC</name>
<protein>
    <recommendedName>
        <fullName>NADH-ubiquinone oxidoreductase chain 1</fullName>
        <ecNumber>7.1.1.2</ecNumber>
    </recommendedName>
    <alternativeName>
        <fullName>NADH dehydrogenase subunit 1</fullName>
    </alternativeName>
</protein>
<organism>
    <name type="scientific">Tachyglossus aculeatus aculeatus</name>
    <name type="common">Southeast Australian short-beaked echidna</name>
    <dbReference type="NCBI Taxonomy" id="49271"/>
    <lineage>
        <taxon>Eukaryota</taxon>
        <taxon>Metazoa</taxon>
        <taxon>Chordata</taxon>
        <taxon>Craniata</taxon>
        <taxon>Vertebrata</taxon>
        <taxon>Euteleostomi</taxon>
        <taxon>Mammalia</taxon>
        <taxon>Monotremata</taxon>
        <taxon>Tachyglossidae</taxon>
        <taxon>Tachyglossus</taxon>
    </lineage>
</organism>
<sequence>MFLINLLLLIVPVLLAVAFLTLIERKILGYMQFRKGPNIVGPHGLLQPIADAVKLFIKEPLRPLTSSIYMFILAPILALSLALTIWVPLPMPLPLIDLNLGLLFILSVSGLSVYSILWSGWASNSKYALTGALRAVAQTISYEVTLAIILLSIMLINGSFTLTTLNLTQEFMWLVVPTWPLMLMWFISTLAETNRAPFDLTEGESELVSGFNVEYAAGPFAMFFLAEYANIIIMNALTVILFFGTYHLIFLPELSTTNFMVKTMLLTSLFLWVRASYPRFRYDQLMHLLWKNFLPITLVTCLWYIMFPTMLSGTPPQM</sequence>
<keyword id="KW-0249">Electron transport</keyword>
<keyword id="KW-0472">Membrane</keyword>
<keyword id="KW-0496">Mitochondrion</keyword>
<keyword id="KW-0999">Mitochondrion inner membrane</keyword>
<keyword id="KW-0520">NAD</keyword>
<keyword id="KW-0679">Respiratory chain</keyword>
<keyword id="KW-1278">Translocase</keyword>
<keyword id="KW-0812">Transmembrane</keyword>
<keyword id="KW-1133">Transmembrane helix</keyword>
<keyword id="KW-0813">Transport</keyword>
<keyword id="KW-0830">Ubiquinone</keyword>
<geneLocation type="mitochondrion"/>